<reference key="1">
    <citation type="submission" date="2006-03" db="EMBL/GenBank/DDBJ databases">
        <title>Complete sequence of chromosome of Psychrobacter cryohalolentis K5.</title>
        <authorList>
            <consortium name="US DOE Joint Genome Institute"/>
            <person name="Copeland A."/>
            <person name="Lucas S."/>
            <person name="Lapidus A."/>
            <person name="Barry K."/>
            <person name="Detter J.C."/>
            <person name="Glavina T."/>
            <person name="Hammon N."/>
            <person name="Israni S."/>
            <person name="Dalin E."/>
            <person name="Tice H."/>
            <person name="Pitluck S."/>
            <person name="Brettin T."/>
            <person name="Bruce D."/>
            <person name="Han C."/>
            <person name="Tapia R."/>
            <person name="Sims D.R."/>
            <person name="Gilna P."/>
            <person name="Schmutz J."/>
            <person name="Larimer F."/>
            <person name="Land M."/>
            <person name="Hauser L."/>
            <person name="Kyrpides N."/>
            <person name="Kim E."/>
            <person name="Richardson P."/>
        </authorList>
    </citation>
    <scope>NUCLEOTIDE SEQUENCE [LARGE SCALE GENOMIC DNA]</scope>
    <source>
        <strain>ATCC BAA-1226 / DSM 17306 / VKM B-2378 / K5</strain>
    </source>
</reference>
<dbReference type="EMBL" id="CP000323">
    <property type="protein sequence ID" value="ABE76081.1"/>
    <property type="molecule type" value="Genomic_DNA"/>
</dbReference>
<dbReference type="RefSeq" id="WP_011514611.1">
    <property type="nucleotide sequence ID" value="NC_007969.1"/>
</dbReference>
<dbReference type="SMR" id="Q1Q8C2"/>
<dbReference type="STRING" id="335284.Pcryo_2304"/>
<dbReference type="KEGG" id="pcr:Pcryo_2304"/>
<dbReference type="eggNOG" id="COG1826">
    <property type="taxonomic scope" value="Bacteria"/>
</dbReference>
<dbReference type="HOGENOM" id="CLU_1304040_0_0_6"/>
<dbReference type="Proteomes" id="UP000002425">
    <property type="component" value="Chromosome"/>
</dbReference>
<dbReference type="GO" id="GO:0033281">
    <property type="term" value="C:TAT protein transport complex"/>
    <property type="evidence" value="ECO:0007669"/>
    <property type="project" value="UniProtKB-UniRule"/>
</dbReference>
<dbReference type="GO" id="GO:0008320">
    <property type="term" value="F:protein transmembrane transporter activity"/>
    <property type="evidence" value="ECO:0007669"/>
    <property type="project" value="UniProtKB-UniRule"/>
</dbReference>
<dbReference type="GO" id="GO:0043953">
    <property type="term" value="P:protein transport by the Tat complex"/>
    <property type="evidence" value="ECO:0007669"/>
    <property type="project" value="UniProtKB-UniRule"/>
</dbReference>
<dbReference type="Gene3D" id="1.20.5.3310">
    <property type="match status" value="1"/>
</dbReference>
<dbReference type="HAMAP" id="MF_00237">
    <property type="entry name" value="TatB"/>
    <property type="match status" value="1"/>
</dbReference>
<dbReference type="InterPro" id="IPR003369">
    <property type="entry name" value="TatA/B/E"/>
</dbReference>
<dbReference type="InterPro" id="IPR018448">
    <property type="entry name" value="TatB"/>
</dbReference>
<dbReference type="NCBIfam" id="TIGR01410">
    <property type="entry name" value="tatB"/>
    <property type="match status" value="1"/>
</dbReference>
<dbReference type="PANTHER" id="PTHR33162">
    <property type="entry name" value="SEC-INDEPENDENT PROTEIN TRANSLOCASE PROTEIN TATA, CHLOROPLASTIC"/>
    <property type="match status" value="1"/>
</dbReference>
<dbReference type="PANTHER" id="PTHR33162:SF1">
    <property type="entry name" value="SEC-INDEPENDENT PROTEIN TRANSLOCASE PROTEIN TATA, CHLOROPLASTIC"/>
    <property type="match status" value="1"/>
</dbReference>
<dbReference type="Pfam" id="PF02416">
    <property type="entry name" value="TatA_B_E"/>
    <property type="match status" value="1"/>
</dbReference>
<dbReference type="PRINTS" id="PR01506">
    <property type="entry name" value="TATBPROTEIN"/>
</dbReference>
<sequence>MFDIGFSELLLFGVIALIVLGPEKLPQAARTAGQWYAKIRRTVSTLQSEIEAELDLAETRQQMQKELAKIRQTEAEMRREMAEMRGSMQEFESSKNQHLKASRDLVDDAKPRQSSQGSSENDDNRPVSPKSFDYAYDNNRQAEKPESSEQPSAQGDNDSLKTDFNDNANPVIQTITTRPWENMWFRLGAYDKARRLPQPPYLPNYKADILLNSHIDSLLPKQASVNEQESH</sequence>
<comment type="function">
    <text evidence="1">Part of the twin-arginine translocation (Tat) system that transports large folded proteins containing a characteristic twin-arginine motif in their signal peptide across membranes. Together with TatC, TatB is part of a receptor directly interacting with Tat signal peptides. TatB may form an oligomeric binding site that transiently accommodates folded Tat precursor proteins before their translocation.</text>
</comment>
<comment type="subunit">
    <text evidence="1">The Tat system comprises two distinct complexes: a TatABC complex, containing multiple copies of TatA, TatB and TatC subunits, and a separate TatA complex, containing only TatA subunits. Substrates initially bind to the TatABC complex, which probably triggers association of the separate TatA complex to form the active translocon.</text>
</comment>
<comment type="subcellular location">
    <subcellularLocation>
        <location evidence="1">Cell inner membrane</location>
        <topology evidence="1">Single-pass membrane protein</topology>
    </subcellularLocation>
</comment>
<comment type="similarity">
    <text evidence="1">Belongs to the TatB family.</text>
</comment>
<feature type="chain" id="PRO_0000301214" description="Sec-independent protein translocase protein TatB">
    <location>
        <begin position="1"/>
        <end position="231"/>
    </location>
</feature>
<feature type="transmembrane region" description="Helical" evidence="1">
    <location>
        <begin position="1"/>
        <end position="21"/>
    </location>
</feature>
<feature type="region of interest" description="Disordered" evidence="2">
    <location>
        <begin position="77"/>
        <end position="168"/>
    </location>
</feature>
<feature type="compositionally biased region" description="Basic and acidic residues" evidence="2">
    <location>
        <begin position="101"/>
        <end position="111"/>
    </location>
</feature>
<feature type="compositionally biased region" description="Polar residues" evidence="2">
    <location>
        <begin position="148"/>
        <end position="157"/>
    </location>
</feature>
<protein>
    <recommendedName>
        <fullName evidence="1">Sec-independent protein translocase protein TatB</fullName>
    </recommendedName>
</protein>
<name>TATB_PSYCK</name>
<keyword id="KW-0997">Cell inner membrane</keyword>
<keyword id="KW-1003">Cell membrane</keyword>
<keyword id="KW-0472">Membrane</keyword>
<keyword id="KW-0653">Protein transport</keyword>
<keyword id="KW-0811">Translocation</keyword>
<keyword id="KW-0812">Transmembrane</keyword>
<keyword id="KW-1133">Transmembrane helix</keyword>
<keyword id="KW-0813">Transport</keyword>
<evidence type="ECO:0000255" key="1">
    <source>
        <dbReference type="HAMAP-Rule" id="MF_00237"/>
    </source>
</evidence>
<evidence type="ECO:0000256" key="2">
    <source>
        <dbReference type="SAM" id="MobiDB-lite"/>
    </source>
</evidence>
<gene>
    <name evidence="1" type="primary">tatB</name>
    <name type="ordered locus">Pcryo_2304</name>
</gene>
<organism>
    <name type="scientific">Psychrobacter cryohalolentis (strain ATCC BAA-1226 / DSM 17306 / VKM B-2378 / K5)</name>
    <dbReference type="NCBI Taxonomy" id="335284"/>
    <lineage>
        <taxon>Bacteria</taxon>
        <taxon>Pseudomonadati</taxon>
        <taxon>Pseudomonadota</taxon>
        <taxon>Gammaproteobacteria</taxon>
        <taxon>Moraxellales</taxon>
        <taxon>Moraxellaceae</taxon>
        <taxon>Psychrobacter</taxon>
    </lineage>
</organism>
<proteinExistence type="inferred from homology"/>
<accession>Q1Q8C2</accession>